<gene>
    <name type="ordered locus">Ba71V-98</name>
    <name type="ORF">O61R</name>
</gene>
<organismHost>
    <name type="scientific">Ornithodoros</name>
    <name type="common">relapsing fever ticks</name>
    <dbReference type="NCBI Taxonomy" id="6937"/>
</organismHost>
<organismHost>
    <name type="scientific">Sus scrofa</name>
    <name type="common">Pig</name>
    <dbReference type="NCBI Taxonomy" id="9823"/>
</organismHost>
<proteinExistence type="evidence at protein level"/>
<sequence>MALDGSSGGGSNVETLLIVAIIVVIMAIMLYYFWWMPRQQKKCSKAEECTCNNGSCSLKTS</sequence>
<organism>
    <name type="scientific">African swine fever virus (strain Badajoz 1971 Vero-adapted)</name>
    <name type="common">Ba71V</name>
    <name type="synonym">ASFV</name>
    <dbReference type="NCBI Taxonomy" id="10498"/>
    <lineage>
        <taxon>Viruses</taxon>
        <taxon>Varidnaviria</taxon>
        <taxon>Bamfordvirae</taxon>
        <taxon>Nucleocytoviricota</taxon>
        <taxon>Pokkesviricetes</taxon>
        <taxon>Asfuvirales</taxon>
        <taxon>Asfarviridae</taxon>
        <taxon>Asfivirus</taxon>
        <taxon>African swine fever virus</taxon>
    </lineage>
</organism>
<reference key="1">
    <citation type="journal article" date="1992" name="J. Virol.">
        <title>Amino acid sequence and structural properties of protein p12, an African swine fever virus attachment protein.</title>
        <authorList>
            <person name="Alcami A."/>
            <person name="Angulo A."/>
            <person name="Lopez-Otin C."/>
            <person name="Munoz M."/>
            <person name="Freije J.M.P."/>
            <person name="Carrascosa A.L."/>
            <person name="Vinuela E."/>
        </authorList>
    </citation>
    <scope>NUCLEOTIDE SEQUENCE [GENOMIC DNA]</scope>
    <scope>INDUCTION</scope>
    <scope>SUBUNIT</scope>
</reference>
<reference key="2">
    <citation type="journal article" date="1995" name="Virology">
        <title>Analysis of the complete nucleotide sequence of African swine fever virus.</title>
        <authorList>
            <person name="Yanez R.J."/>
            <person name="Rodriguez J.M."/>
            <person name="Nogal M.L."/>
            <person name="Yuste L."/>
            <person name="Enriquez C."/>
            <person name="Rodriguez J.F."/>
            <person name="Vinuela E."/>
        </authorList>
    </citation>
    <scope>NUCLEOTIDE SEQUENCE [LARGE SCALE GENOMIC DNA]</scope>
</reference>
<reference key="3">
    <citation type="journal article" date="2018" name="J. Virol.">
        <title>A Proteomic Atlas of the African Swine Fever Virus Particle.</title>
        <authorList>
            <person name="Alejo A."/>
            <person name="Matamoros T."/>
            <person name="Guerra M."/>
            <person name="Andres G."/>
        </authorList>
    </citation>
    <scope>SUBCELLULAR LOCATION</scope>
</reference>
<reference key="4">
    <citation type="journal article" date="2020" name="J. Virol.">
        <title>The African Swine Fever Virus Transcriptome.</title>
        <authorList>
            <person name="Cackett G."/>
            <person name="Matelska D."/>
            <person name="Sykora M."/>
            <person name="Portugal R."/>
            <person name="Malecki M."/>
            <person name="Baehler J."/>
            <person name="Dixon L."/>
            <person name="Werner F."/>
        </authorList>
    </citation>
    <scope>INDUCTION</scope>
</reference>
<accession>P32510</accession>
<feature type="chain" id="PRO_0000221943" description="Inner membrane protein p12">
    <location>
        <begin position="1"/>
        <end position="61"/>
    </location>
</feature>
<feature type="transmembrane region" description="Helical" evidence="1">
    <location>
        <begin position="16"/>
        <end position="36"/>
    </location>
</feature>
<comment type="subunit">
    <text evidence="2">Homomultimer; disulfide-linked.</text>
</comment>
<comment type="subcellular location">
    <subcellularLocation>
        <location evidence="6">Virion membrane</location>
        <topology evidence="5">Single-pass membrane protein</topology>
    </subcellularLocation>
    <text evidence="3">Part of the virion inner membrane.</text>
</comment>
<comment type="induction">
    <text evidence="2 4">Expressed in the late phase of the viral replicative cycle.</text>
</comment>
<comment type="PTM">
    <text evidence="2">Not glycosylated.</text>
</comment>
<comment type="similarity">
    <text evidence="5">Belongs to the asfivirus inner membrane protein p12 family.</text>
</comment>
<keyword id="KW-1015">Disulfide bond</keyword>
<keyword id="KW-0426">Late protein</keyword>
<keyword id="KW-0472">Membrane</keyword>
<keyword id="KW-1185">Reference proteome</keyword>
<keyword id="KW-0812">Transmembrane</keyword>
<keyword id="KW-1133">Transmembrane helix</keyword>
<keyword id="KW-0946">Virion</keyword>
<protein>
    <recommendedName>
        <fullName>Inner membrane protein p12</fullName>
    </recommendedName>
    <alternativeName>
        <fullName>Protein p12</fullName>
    </alternativeName>
</protein>
<dbReference type="EMBL" id="M84178">
    <property type="protein sequence ID" value="AAA42725.1"/>
    <property type="molecule type" value="Genomic_DNA"/>
</dbReference>
<dbReference type="EMBL" id="M84186">
    <property type="protein sequence ID" value="AAA42723.1"/>
    <property type="molecule type" value="Genomic_DNA"/>
</dbReference>
<dbReference type="EMBL" id="U18466">
    <property type="protein sequence ID" value="AAA65327.1"/>
    <property type="molecule type" value="Genomic_DNA"/>
</dbReference>
<dbReference type="PIR" id="A41998">
    <property type="entry name" value="WMXF12"/>
</dbReference>
<dbReference type="RefSeq" id="NP_042791.1">
    <property type="nucleotide sequence ID" value="NC_001659.2"/>
</dbReference>
<dbReference type="SMR" id="P32510"/>
<dbReference type="GeneID" id="22220327"/>
<dbReference type="KEGG" id="vg:22220327"/>
<dbReference type="Proteomes" id="UP000000624">
    <property type="component" value="Segment"/>
</dbReference>
<dbReference type="GO" id="GO:0016020">
    <property type="term" value="C:membrane"/>
    <property type="evidence" value="ECO:0007669"/>
    <property type="project" value="UniProtKB-KW"/>
</dbReference>
<dbReference type="GO" id="GO:0055036">
    <property type="term" value="C:virion membrane"/>
    <property type="evidence" value="ECO:0007669"/>
    <property type="project" value="UniProtKB-SubCell"/>
</dbReference>
<dbReference type="GO" id="GO:0019062">
    <property type="term" value="P:virion attachment to host cell"/>
    <property type="evidence" value="ECO:0000314"/>
    <property type="project" value="CACAO"/>
</dbReference>
<evidence type="ECO:0000255" key="1"/>
<evidence type="ECO:0000269" key="2">
    <source>
    </source>
</evidence>
<evidence type="ECO:0000269" key="3">
    <source>
    </source>
</evidence>
<evidence type="ECO:0000269" key="4">
    <source>
    </source>
</evidence>
<evidence type="ECO:0000305" key="5"/>
<evidence type="ECO:0000305" key="6">
    <source>
    </source>
</evidence>
<name>P12_ASFB7</name>